<feature type="chain" id="PRO_0000259906" description="Elongation factor P-like protein">
    <location>
        <begin position="1"/>
        <end position="190"/>
    </location>
</feature>
<proteinExistence type="inferred from homology"/>
<comment type="similarity">
    <text evidence="1">Belongs to the elongation factor P family.</text>
</comment>
<evidence type="ECO:0000255" key="1">
    <source>
        <dbReference type="HAMAP-Rule" id="MF_00646"/>
    </source>
</evidence>
<organism>
    <name type="scientific">Yersinia pestis bv. Antiqua (strain Antiqua)</name>
    <dbReference type="NCBI Taxonomy" id="360102"/>
    <lineage>
        <taxon>Bacteria</taxon>
        <taxon>Pseudomonadati</taxon>
        <taxon>Pseudomonadota</taxon>
        <taxon>Gammaproteobacteria</taxon>
        <taxon>Enterobacterales</taxon>
        <taxon>Yersiniaceae</taxon>
        <taxon>Yersinia</taxon>
    </lineage>
</organism>
<name>EFPL_YERPA</name>
<protein>
    <recommendedName>
        <fullName evidence="1">Elongation factor P-like protein</fullName>
    </recommendedName>
</protein>
<accession>Q1C9A5</accession>
<dbReference type="EMBL" id="CP000308">
    <property type="protein sequence ID" value="ABG12967.1"/>
    <property type="molecule type" value="Genomic_DNA"/>
</dbReference>
<dbReference type="SMR" id="Q1C9A5"/>
<dbReference type="KEGG" id="ypa:YPA_1000"/>
<dbReference type="Proteomes" id="UP000001971">
    <property type="component" value="Chromosome"/>
</dbReference>
<dbReference type="GO" id="GO:0005737">
    <property type="term" value="C:cytoplasm"/>
    <property type="evidence" value="ECO:0007669"/>
    <property type="project" value="InterPro"/>
</dbReference>
<dbReference type="GO" id="GO:0003746">
    <property type="term" value="F:translation elongation factor activity"/>
    <property type="evidence" value="ECO:0007669"/>
    <property type="project" value="UniProtKB-UniRule"/>
</dbReference>
<dbReference type="GO" id="GO:0043043">
    <property type="term" value="P:peptide biosynthetic process"/>
    <property type="evidence" value="ECO:0007669"/>
    <property type="project" value="InterPro"/>
</dbReference>
<dbReference type="CDD" id="cd04470">
    <property type="entry name" value="S1_EF-P_repeat_1"/>
    <property type="match status" value="1"/>
</dbReference>
<dbReference type="CDD" id="cd05794">
    <property type="entry name" value="S1_EF-P_repeat_2"/>
    <property type="match status" value="1"/>
</dbReference>
<dbReference type="FunFam" id="2.40.50.140:FF:000004">
    <property type="entry name" value="Elongation factor P"/>
    <property type="match status" value="1"/>
</dbReference>
<dbReference type="FunFam" id="2.30.30.30:FF:000011">
    <property type="entry name" value="Elongation factor P-like protein"/>
    <property type="match status" value="1"/>
</dbReference>
<dbReference type="FunFam" id="2.40.50.140:FF:000053">
    <property type="entry name" value="Elongation factor P-like protein"/>
    <property type="match status" value="1"/>
</dbReference>
<dbReference type="Gene3D" id="2.30.30.30">
    <property type="match status" value="1"/>
</dbReference>
<dbReference type="Gene3D" id="2.40.50.140">
    <property type="entry name" value="Nucleic acid-binding proteins"/>
    <property type="match status" value="2"/>
</dbReference>
<dbReference type="HAMAP" id="MF_00646">
    <property type="entry name" value="EFP"/>
    <property type="match status" value="1"/>
</dbReference>
<dbReference type="InterPro" id="IPR015365">
    <property type="entry name" value="Elong-fact-P_C"/>
</dbReference>
<dbReference type="InterPro" id="IPR012340">
    <property type="entry name" value="NA-bd_OB-fold"/>
</dbReference>
<dbReference type="InterPro" id="IPR014722">
    <property type="entry name" value="Rib_uL2_dom2"/>
</dbReference>
<dbReference type="InterPro" id="IPR020599">
    <property type="entry name" value="Transl_elong_fac_P/YeiP"/>
</dbReference>
<dbReference type="InterPro" id="IPR013185">
    <property type="entry name" value="Transl_elong_KOW-like"/>
</dbReference>
<dbReference type="InterPro" id="IPR011897">
    <property type="entry name" value="Transl_elong_p-like_YeiP"/>
</dbReference>
<dbReference type="InterPro" id="IPR001059">
    <property type="entry name" value="Transl_elong_P/YeiP_cen"/>
</dbReference>
<dbReference type="InterPro" id="IPR013852">
    <property type="entry name" value="Transl_elong_P/YeiP_CS"/>
</dbReference>
<dbReference type="InterPro" id="IPR008991">
    <property type="entry name" value="Translation_prot_SH3-like_sf"/>
</dbReference>
<dbReference type="NCBIfam" id="NF001810">
    <property type="entry name" value="PRK00529.1"/>
    <property type="match status" value="1"/>
</dbReference>
<dbReference type="NCBIfam" id="NF003392">
    <property type="entry name" value="PRK04542.1"/>
    <property type="match status" value="1"/>
</dbReference>
<dbReference type="NCBIfam" id="TIGR02178">
    <property type="entry name" value="yeiP"/>
    <property type="match status" value="1"/>
</dbReference>
<dbReference type="PANTHER" id="PTHR30053">
    <property type="entry name" value="ELONGATION FACTOR P"/>
    <property type="match status" value="1"/>
</dbReference>
<dbReference type="PANTHER" id="PTHR30053:SF14">
    <property type="entry name" value="TRANSLATION ELONGATION FACTOR KOW-LIKE DOMAIN-CONTAINING PROTEIN"/>
    <property type="match status" value="1"/>
</dbReference>
<dbReference type="Pfam" id="PF01132">
    <property type="entry name" value="EFP"/>
    <property type="match status" value="1"/>
</dbReference>
<dbReference type="Pfam" id="PF08207">
    <property type="entry name" value="EFP_N"/>
    <property type="match status" value="1"/>
</dbReference>
<dbReference type="Pfam" id="PF09285">
    <property type="entry name" value="Elong-fact-P_C"/>
    <property type="match status" value="1"/>
</dbReference>
<dbReference type="PIRSF" id="PIRSF005901">
    <property type="entry name" value="EF-P"/>
    <property type="match status" value="1"/>
</dbReference>
<dbReference type="SMART" id="SM01185">
    <property type="entry name" value="EFP"/>
    <property type="match status" value="1"/>
</dbReference>
<dbReference type="SMART" id="SM00841">
    <property type="entry name" value="Elong-fact-P_C"/>
    <property type="match status" value="1"/>
</dbReference>
<dbReference type="SUPFAM" id="SSF50249">
    <property type="entry name" value="Nucleic acid-binding proteins"/>
    <property type="match status" value="2"/>
</dbReference>
<dbReference type="SUPFAM" id="SSF50104">
    <property type="entry name" value="Translation proteins SH3-like domain"/>
    <property type="match status" value="1"/>
</dbReference>
<dbReference type="PROSITE" id="PS01275">
    <property type="entry name" value="EFP"/>
    <property type="match status" value="1"/>
</dbReference>
<gene>
    <name type="ordered locus">YPA_1000</name>
</gene>
<reference key="1">
    <citation type="journal article" date="2006" name="J. Bacteriol.">
        <title>Complete genome sequence of Yersinia pestis strains Antiqua and Nepal516: evidence of gene reduction in an emerging pathogen.</title>
        <authorList>
            <person name="Chain P.S.G."/>
            <person name="Hu P."/>
            <person name="Malfatti S.A."/>
            <person name="Radnedge L."/>
            <person name="Larimer F."/>
            <person name="Vergez L.M."/>
            <person name="Worsham P."/>
            <person name="Chu M.C."/>
            <person name="Andersen G.L."/>
        </authorList>
    </citation>
    <scope>NUCLEOTIDE SEQUENCE [LARGE SCALE GENOMIC DNA]</scope>
    <source>
        <strain>Antiqua</strain>
    </source>
</reference>
<sequence>MAKANEIKRGMAVNLNGKLLLVKDIDVQSPSARGASTLYKMRFSDVRTGLKVEERFKGDENLDTITLTRRAVNFSYIDGDEYVFMDDEDYTPYNFKKEQIEDELLFIPEGGMPGMQVLTMEGQLLALELPQTVDMEIVDTAPSIKGASASARNKPAIMSTGLSIQVPEYISPGEKIRIHIAERRYMGRAD</sequence>